<reference key="1">
    <citation type="journal article" date="2000" name="Nature">
        <title>Complete DNA sequence of a serogroup A strain of Neisseria meningitidis Z2491.</title>
        <authorList>
            <person name="Parkhill J."/>
            <person name="Achtman M."/>
            <person name="James K.D."/>
            <person name="Bentley S.D."/>
            <person name="Churcher C.M."/>
            <person name="Klee S.R."/>
            <person name="Morelli G."/>
            <person name="Basham D."/>
            <person name="Brown D."/>
            <person name="Chillingworth T."/>
            <person name="Davies R.M."/>
            <person name="Davis P."/>
            <person name="Devlin K."/>
            <person name="Feltwell T."/>
            <person name="Hamlin N."/>
            <person name="Holroyd S."/>
            <person name="Jagels K."/>
            <person name="Leather S."/>
            <person name="Moule S."/>
            <person name="Mungall K.L."/>
            <person name="Quail M.A."/>
            <person name="Rajandream M.A."/>
            <person name="Rutherford K.M."/>
            <person name="Simmonds M."/>
            <person name="Skelton J."/>
            <person name="Whitehead S."/>
            <person name="Spratt B.G."/>
            <person name="Barrell B.G."/>
        </authorList>
    </citation>
    <scope>NUCLEOTIDE SEQUENCE [LARGE SCALE GENOMIC DNA]</scope>
    <source>
        <strain>DSM 15465 / Z2491</strain>
    </source>
</reference>
<organism>
    <name type="scientific">Neisseria meningitidis serogroup A / serotype 4A (strain DSM 15465 / Z2491)</name>
    <dbReference type="NCBI Taxonomy" id="122587"/>
    <lineage>
        <taxon>Bacteria</taxon>
        <taxon>Pseudomonadati</taxon>
        <taxon>Pseudomonadota</taxon>
        <taxon>Betaproteobacteria</taxon>
        <taxon>Neisseriales</taxon>
        <taxon>Neisseriaceae</taxon>
        <taxon>Neisseria</taxon>
    </lineage>
</organism>
<proteinExistence type="inferred from homology"/>
<name>HSCB_NEIMA</name>
<protein>
    <recommendedName>
        <fullName evidence="1">Co-chaperone protein HscB homolog</fullName>
    </recommendedName>
</protein>
<keyword id="KW-0143">Chaperone</keyword>
<gene>
    <name evidence="1" type="primary">hscB</name>
    <name type="ordered locus">NMA1598</name>
</gene>
<comment type="function">
    <text evidence="1">Co-chaperone involved in the maturation of iron-sulfur cluster-containing proteins. Seems to help targeting proteins to be folded toward HscA.</text>
</comment>
<comment type="subunit">
    <text evidence="1">Interacts with HscA and stimulates its ATPase activity.</text>
</comment>
<comment type="similarity">
    <text evidence="1">Belongs to the HscB family.</text>
</comment>
<dbReference type="EMBL" id="AL157959">
    <property type="protein sequence ID" value="CAM08740.1"/>
    <property type="molecule type" value="Genomic_DNA"/>
</dbReference>
<dbReference type="PIR" id="A81853">
    <property type="entry name" value="A81853"/>
</dbReference>
<dbReference type="RefSeq" id="WP_002235901.1">
    <property type="nucleotide sequence ID" value="NC_003116.1"/>
</dbReference>
<dbReference type="SMR" id="Q9JTW6"/>
<dbReference type="EnsemblBacteria" id="CAM08740">
    <property type="protein sequence ID" value="CAM08740"/>
    <property type="gene ID" value="NMA1598"/>
</dbReference>
<dbReference type="GeneID" id="93387979"/>
<dbReference type="KEGG" id="nma:NMA1598"/>
<dbReference type="HOGENOM" id="CLU_068529_2_0_4"/>
<dbReference type="Proteomes" id="UP000000626">
    <property type="component" value="Chromosome"/>
</dbReference>
<dbReference type="GO" id="GO:1990230">
    <property type="term" value="C:iron-sulfur cluster transfer complex"/>
    <property type="evidence" value="ECO:0007669"/>
    <property type="project" value="TreeGrafter"/>
</dbReference>
<dbReference type="GO" id="GO:0001671">
    <property type="term" value="F:ATPase activator activity"/>
    <property type="evidence" value="ECO:0007669"/>
    <property type="project" value="InterPro"/>
</dbReference>
<dbReference type="GO" id="GO:0051087">
    <property type="term" value="F:protein-folding chaperone binding"/>
    <property type="evidence" value="ECO:0007669"/>
    <property type="project" value="InterPro"/>
</dbReference>
<dbReference type="GO" id="GO:0044571">
    <property type="term" value="P:[2Fe-2S] cluster assembly"/>
    <property type="evidence" value="ECO:0007669"/>
    <property type="project" value="InterPro"/>
</dbReference>
<dbReference type="GO" id="GO:0051259">
    <property type="term" value="P:protein complex oligomerization"/>
    <property type="evidence" value="ECO:0007669"/>
    <property type="project" value="InterPro"/>
</dbReference>
<dbReference type="GO" id="GO:0006457">
    <property type="term" value="P:protein folding"/>
    <property type="evidence" value="ECO:0007669"/>
    <property type="project" value="UniProtKB-UniRule"/>
</dbReference>
<dbReference type="CDD" id="cd06257">
    <property type="entry name" value="DnaJ"/>
    <property type="match status" value="1"/>
</dbReference>
<dbReference type="FunFam" id="1.10.287.110:FF:000088">
    <property type="entry name" value="Co-chaperone protein HscB homolog"/>
    <property type="match status" value="1"/>
</dbReference>
<dbReference type="Gene3D" id="1.10.287.110">
    <property type="entry name" value="DnaJ domain"/>
    <property type="match status" value="1"/>
</dbReference>
<dbReference type="Gene3D" id="1.20.1280.20">
    <property type="entry name" value="HscB, C-terminal domain"/>
    <property type="match status" value="1"/>
</dbReference>
<dbReference type="HAMAP" id="MF_00682">
    <property type="entry name" value="HscB"/>
    <property type="match status" value="1"/>
</dbReference>
<dbReference type="InterPro" id="IPR001623">
    <property type="entry name" value="DnaJ_domain"/>
</dbReference>
<dbReference type="InterPro" id="IPR004640">
    <property type="entry name" value="HscB"/>
</dbReference>
<dbReference type="InterPro" id="IPR036386">
    <property type="entry name" value="HscB_C_sf"/>
</dbReference>
<dbReference type="InterPro" id="IPR009073">
    <property type="entry name" value="HscB_oligo_C"/>
</dbReference>
<dbReference type="InterPro" id="IPR036869">
    <property type="entry name" value="J_dom_sf"/>
</dbReference>
<dbReference type="NCBIfam" id="TIGR00714">
    <property type="entry name" value="hscB"/>
    <property type="match status" value="1"/>
</dbReference>
<dbReference type="PANTHER" id="PTHR14021">
    <property type="entry name" value="IRON-SULFUR CLUSTER CO-CHAPERONE PROTEIN HSCB"/>
    <property type="match status" value="1"/>
</dbReference>
<dbReference type="PANTHER" id="PTHR14021:SF15">
    <property type="entry name" value="IRON-SULFUR CLUSTER CO-CHAPERONE PROTEIN HSCB"/>
    <property type="match status" value="1"/>
</dbReference>
<dbReference type="Pfam" id="PF00226">
    <property type="entry name" value="DnaJ"/>
    <property type="match status" value="1"/>
</dbReference>
<dbReference type="Pfam" id="PF07743">
    <property type="entry name" value="HSCB_C"/>
    <property type="match status" value="1"/>
</dbReference>
<dbReference type="SMART" id="SM00271">
    <property type="entry name" value="DnaJ"/>
    <property type="match status" value="1"/>
</dbReference>
<dbReference type="SUPFAM" id="SSF46565">
    <property type="entry name" value="Chaperone J-domain"/>
    <property type="match status" value="1"/>
</dbReference>
<dbReference type="SUPFAM" id="SSF47144">
    <property type="entry name" value="HSC20 (HSCB), C-terminal oligomerisation domain"/>
    <property type="match status" value="1"/>
</dbReference>
<dbReference type="PROSITE" id="PS50076">
    <property type="entry name" value="DNAJ_2"/>
    <property type="match status" value="1"/>
</dbReference>
<feature type="chain" id="PRO_0000070974" description="Co-chaperone protein HscB homolog">
    <location>
        <begin position="1"/>
        <end position="166"/>
    </location>
</feature>
<feature type="domain" description="J" evidence="1">
    <location>
        <begin position="3"/>
        <end position="75"/>
    </location>
</feature>
<accession>Q9JTW6</accession>
<accession>A1ISI3</accession>
<sequence>MSQYFTLFRIEPAFDIDTENLEQTYRALAARFHPDKFASASAFEQKQAVMMSSTINDAYRTLKNPIDRAAYLLKTSGIDADAPEHTSFASEFLMQQMEWRETLMEARAGKDLESLKNLDNEIRDEQEKLFCGLKQSFARQDYDTAAQQVRQGRFLDKLRNEISSAL</sequence>
<evidence type="ECO:0000255" key="1">
    <source>
        <dbReference type="HAMAP-Rule" id="MF_00682"/>
    </source>
</evidence>